<comment type="function">
    <text evidence="2">Protease subunit of a proteasome-like degradation complex believed to be a general protein degrading machinery.</text>
</comment>
<comment type="catalytic activity">
    <reaction evidence="2">
        <text>ATP-dependent cleavage of peptide bonds with broad specificity.</text>
        <dbReference type="EC" id="3.4.25.2"/>
    </reaction>
</comment>
<comment type="activity regulation">
    <text evidence="2">Allosterically activated by HslU binding.</text>
</comment>
<comment type="subunit">
    <text evidence="2">A double ring-shaped homohexamer of HslV is capped on each side by a ring-shaped HslU homohexamer. The assembly of the HslU/HslV complex is dependent on binding of ATP.</text>
</comment>
<comment type="subcellular location">
    <subcellularLocation>
        <location evidence="2">Cytoplasm</location>
    </subcellularLocation>
</comment>
<comment type="similarity">
    <text evidence="2">Belongs to the peptidase T1B family. HslV subfamily.</text>
</comment>
<dbReference type="EC" id="3.4.25.2" evidence="2"/>
<dbReference type="EMBL" id="AE017143">
    <property type="protein sequence ID" value="AAP96718.1"/>
    <property type="molecule type" value="Genomic_DNA"/>
</dbReference>
<dbReference type="RefSeq" id="WP_010945739.1">
    <property type="nucleotide sequence ID" value="NC_002940.2"/>
</dbReference>
<dbReference type="SMR" id="Q7VKB4"/>
<dbReference type="STRING" id="233412.HD_2006"/>
<dbReference type="MEROPS" id="T01.007"/>
<dbReference type="GeneID" id="60733524"/>
<dbReference type="KEGG" id="hdu:HD_2006"/>
<dbReference type="eggNOG" id="COG5405">
    <property type="taxonomic scope" value="Bacteria"/>
</dbReference>
<dbReference type="HOGENOM" id="CLU_093872_1_0_6"/>
<dbReference type="OrthoDB" id="9804884at2"/>
<dbReference type="Proteomes" id="UP000001022">
    <property type="component" value="Chromosome"/>
</dbReference>
<dbReference type="GO" id="GO:0009376">
    <property type="term" value="C:HslUV protease complex"/>
    <property type="evidence" value="ECO:0007669"/>
    <property type="project" value="UniProtKB-UniRule"/>
</dbReference>
<dbReference type="GO" id="GO:0005839">
    <property type="term" value="C:proteasome core complex"/>
    <property type="evidence" value="ECO:0007669"/>
    <property type="project" value="InterPro"/>
</dbReference>
<dbReference type="GO" id="GO:0046872">
    <property type="term" value="F:metal ion binding"/>
    <property type="evidence" value="ECO:0007669"/>
    <property type="project" value="UniProtKB-KW"/>
</dbReference>
<dbReference type="GO" id="GO:0004298">
    <property type="term" value="F:threonine-type endopeptidase activity"/>
    <property type="evidence" value="ECO:0007669"/>
    <property type="project" value="UniProtKB-KW"/>
</dbReference>
<dbReference type="GO" id="GO:0051603">
    <property type="term" value="P:proteolysis involved in protein catabolic process"/>
    <property type="evidence" value="ECO:0007669"/>
    <property type="project" value="InterPro"/>
</dbReference>
<dbReference type="CDD" id="cd01913">
    <property type="entry name" value="protease_HslV"/>
    <property type="match status" value="1"/>
</dbReference>
<dbReference type="FunFam" id="3.60.20.10:FF:000002">
    <property type="entry name" value="ATP-dependent protease subunit HslV"/>
    <property type="match status" value="1"/>
</dbReference>
<dbReference type="Gene3D" id="3.60.20.10">
    <property type="entry name" value="Glutamine Phosphoribosylpyrophosphate, subunit 1, domain 1"/>
    <property type="match status" value="1"/>
</dbReference>
<dbReference type="HAMAP" id="MF_00248">
    <property type="entry name" value="HslV"/>
    <property type="match status" value="1"/>
</dbReference>
<dbReference type="InterPro" id="IPR022281">
    <property type="entry name" value="ATP-dep_Prtase_HsIV_su"/>
</dbReference>
<dbReference type="InterPro" id="IPR029055">
    <property type="entry name" value="Ntn_hydrolases_N"/>
</dbReference>
<dbReference type="InterPro" id="IPR001353">
    <property type="entry name" value="Proteasome_sua/b"/>
</dbReference>
<dbReference type="InterPro" id="IPR023333">
    <property type="entry name" value="Proteasome_suB-type"/>
</dbReference>
<dbReference type="NCBIfam" id="TIGR03692">
    <property type="entry name" value="ATP_dep_HslV"/>
    <property type="match status" value="1"/>
</dbReference>
<dbReference type="NCBIfam" id="NF003964">
    <property type="entry name" value="PRK05456.1"/>
    <property type="match status" value="1"/>
</dbReference>
<dbReference type="PANTHER" id="PTHR32194:SF0">
    <property type="entry name" value="ATP-DEPENDENT PROTEASE SUBUNIT HSLV"/>
    <property type="match status" value="1"/>
</dbReference>
<dbReference type="PANTHER" id="PTHR32194">
    <property type="entry name" value="METALLOPROTEASE TLDD"/>
    <property type="match status" value="1"/>
</dbReference>
<dbReference type="Pfam" id="PF00227">
    <property type="entry name" value="Proteasome"/>
    <property type="match status" value="1"/>
</dbReference>
<dbReference type="PIRSF" id="PIRSF039093">
    <property type="entry name" value="HslV"/>
    <property type="match status" value="1"/>
</dbReference>
<dbReference type="SUPFAM" id="SSF56235">
    <property type="entry name" value="N-terminal nucleophile aminohydrolases (Ntn hydrolases)"/>
    <property type="match status" value="1"/>
</dbReference>
<dbReference type="PROSITE" id="PS51476">
    <property type="entry name" value="PROTEASOME_BETA_2"/>
    <property type="match status" value="1"/>
</dbReference>
<feature type="initiator methionine" description="Removed" evidence="1">
    <location>
        <position position="1"/>
    </location>
</feature>
<feature type="chain" id="PRO_0000148110" description="ATP-dependent protease subunit HslV">
    <location>
        <begin position="2"/>
        <end position="173"/>
    </location>
</feature>
<feature type="active site" evidence="2">
    <location>
        <position position="2"/>
    </location>
</feature>
<feature type="binding site" evidence="2">
    <location>
        <position position="158"/>
    </location>
    <ligand>
        <name>Na(+)</name>
        <dbReference type="ChEBI" id="CHEBI:29101"/>
    </ligand>
</feature>
<feature type="binding site" evidence="2">
    <location>
        <position position="161"/>
    </location>
    <ligand>
        <name>Na(+)</name>
        <dbReference type="ChEBI" id="CHEBI:29101"/>
    </ligand>
</feature>
<feature type="binding site" evidence="2">
    <location>
        <position position="164"/>
    </location>
    <ligand>
        <name>Na(+)</name>
        <dbReference type="ChEBI" id="CHEBI:29101"/>
    </ligand>
</feature>
<proteinExistence type="inferred from homology"/>
<reference key="1">
    <citation type="submission" date="2003-06" db="EMBL/GenBank/DDBJ databases">
        <title>The complete genome sequence of Haemophilus ducreyi.</title>
        <authorList>
            <person name="Munson R.S. Jr."/>
            <person name="Ray W.C."/>
            <person name="Mahairas G."/>
            <person name="Sabo P."/>
            <person name="Mungur R."/>
            <person name="Johnson L."/>
            <person name="Nguyen D."/>
            <person name="Wang J."/>
            <person name="Forst C."/>
            <person name="Hood L."/>
        </authorList>
    </citation>
    <scope>NUCLEOTIDE SEQUENCE [LARGE SCALE GENOMIC DNA]</scope>
    <source>
        <strain>35000HP / ATCC 700724</strain>
    </source>
</reference>
<organism>
    <name type="scientific">Haemophilus ducreyi (strain 35000HP / ATCC 700724)</name>
    <dbReference type="NCBI Taxonomy" id="233412"/>
    <lineage>
        <taxon>Bacteria</taxon>
        <taxon>Pseudomonadati</taxon>
        <taxon>Pseudomonadota</taxon>
        <taxon>Gammaproteobacteria</taxon>
        <taxon>Pasteurellales</taxon>
        <taxon>Pasteurellaceae</taxon>
        <taxon>Haemophilus</taxon>
    </lineage>
</organism>
<gene>
    <name evidence="2" type="primary">hslV</name>
    <name type="ordered locus">HD_2006</name>
</gene>
<keyword id="KW-0021">Allosteric enzyme</keyword>
<keyword id="KW-0963">Cytoplasm</keyword>
<keyword id="KW-0378">Hydrolase</keyword>
<keyword id="KW-0479">Metal-binding</keyword>
<keyword id="KW-0645">Protease</keyword>
<keyword id="KW-1185">Reference proteome</keyword>
<keyword id="KW-0915">Sodium</keyword>
<keyword id="KW-0888">Threonine protease</keyword>
<name>HSLV_HAEDU</name>
<evidence type="ECO:0000250" key="1"/>
<evidence type="ECO:0000255" key="2">
    <source>
        <dbReference type="HAMAP-Rule" id="MF_00248"/>
    </source>
</evidence>
<accession>Q7VKB4</accession>
<sequence>MTTIVCVRKDGKVAIGGDGQATLGNCVEKGTVRKVRRLYKDKVITGFAGSTADAFILRDLFEKKLELHQGHLVKSAVELAKEWRTERALRKLEAMMIVANESEFLLVSGSGDVIEPEQDVLAIGSGGNFAKSAALALLRTENNLTAKQIVAEALKIAGDIDIYSNHNHVIEEV</sequence>
<protein>
    <recommendedName>
        <fullName evidence="2">ATP-dependent protease subunit HslV</fullName>
        <ecNumber evidence="2">3.4.25.2</ecNumber>
    </recommendedName>
</protein>